<feature type="chain" id="PRO_1000000407" description="Argininosuccinate synthase">
    <location>
        <begin position="1"/>
        <end position="398"/>
    </location>
</feature>
<feature type="binding site" evidence="1">
    <location>
        <begin position="8"/>
        <end position="16"/>
    </location>
    <ligand>
        <name>ATP</name>
        <dbReference type="ChEBI" id="CHEBI:30616"/>
    </ligand>
</feature>
<feature type="binding site" evidence="1">
    <location>
        <position position="87"/>
    </location>
    <ligand>
        <name>L-citrulline</name>
        <dbReference type="ChEBI" id="CHEBI:57743"/>
    </ligand>
</feature>
<feature type="binding site" evidence="1">
    <location>
        <position position="117"/>
    </location>
    <ligand>
        <name>ATP</name>
        <dbReference type="ChEBI" id="CHEBI:30616"/>
    </ligand>
</feature>
<feature type="binding site" evidence="1">
    <location>
        <position position="119"/>
    </location>
    <ligand>
        <name>L-aspartate</name>
        <dbReference type="ChEBI" id="CHEBI:29991"/>
    </ligand>
</feature>
<feature type="binding site" evidence="1">
    <location>
        <position position="123"/>
    </location>
    <ligand>
        <name>L-aspartate</name>
        <dbReference type="ChEBI" id="CHEBI:29991"/>
    </ligand>
</feature>
<feature type="binding site" evidence="1">
    <location>
        <position position="123"/>
    </location>
    <ligand>
        <name>L-citrulline</name>
        <dbReference type="ChEBI" id="CHEBI:57743"/>
    </ligand>
</feature>
<feature type="binding site" evidence="1">
    <location>
        <position position="124"/>
    </location>
    <ligand>
        <name>L-aspartate</name>
        <dbReference type="ChEBI" id="CHEBI:29991"/>
    </ligand>
</feature>
<feature type="binding site" evidence="1">
    <location>
        <position position="127"/>
    </location>
    <ligand>
        <name>L-citrulline</name>
        <dbReference type="ChEBI" id="CHEBI:57743"/>
    </ligand>
</feature>
<feature type="binding site" evidence="1">
    <location>
        <position position="175"/>
    </location>
    <ligand>
        <name>L-citrulline</name>
        <dbReference type="ChEBI" id="CHEBI:57743"/>
    </ligand>
</feature>
<feature type="binding site" evidence="1">
    <location>
        <position position="260"/>
    </location>
    <ligand>
        <name>L-citrulline</name>
        <dbReference type="ChEBI" id="CHEBI:57743"/>
    </ligand>
</feature>
<feature type="binding site" evidence="1">
    <location>
        <position position="272"/>
    </location>
    <ligand>
        <name>L-citrulline</name>
        <dbReference type="ChEBI" id="CHEBI:57743"/>
    </ligand>
</feature>
<accession>A1KJ75</accession>
<keyword id="KW-0028">Amino-acid biosynthesis</keyword>
<keyword id="KW-0055">Arginine biosynthesis</keyword>
<keyword id="KW-0067">ATP-binding</keyword>
<keyword id="KW-0963">Cytoplasm</keyword>
<keyword id="KW-0436">Ligase</keyword>
<keyword id="KW-0547">Nucleotide-binding</keyword>
<gene>
    <name evidence="1" type="primary">argG</name>
    <name type="ordered locus">BCG_1697</name>
</gene>
<reference key="1">
    <citation type="journal article" date="2007" name="Proc. Natl. Acad. Sci. U.S.A.">
        <title>Genome plasticity of BCG and impact on vaccine efficacy.</title>
        <authorList>
            <person name="Brosch R."/>
            <person name="Gordon S.V."/>
            <person name="Garnier T."/>
            <person name="Eiglmeier K."/>
            <person name="Frigui W."/>
            <person name="Valenti P."/>
            <person name="Dos Santos S."/>
            <person name="Duthoy S."/>
            <person name="Lacroix C."/>
            <person name="Garcia-Pelayo C."/>
            <person name="Inwald J.K."/>
            <person name="Golby P."/>
            <person name="Garcia J.N."/>
            <person name="Hewinson R.G."/>
            <person name="Behr M.A."/>
            <person name="Quail M.A."/>
            <person name="Churcher C."/>
            <person name="Barrell B.G."/>
            <person name="Parkhill J."/>
            <person name="Cole S.T."/>
        </authorList>
    </citation>
    <scope>NUCLEOTIDE SEQUENCE [LARGE SCALE GENOMIC DNA]</scope>
    <source>
        <strain>BCG / Pasteur 1173P2</strain>
    </source>
</reference>
<proteinExistence type="inferred from homology"/>
<dbReference type="EC" id="6.3.4.5" evidence="1"/>
<dbReference type="EMBL" id="AM408590">
    <property type="protein sequence ID" value="CAL71684.1"/>
    <property type="molecule type" value="Genomic_DNA"/>
</dbReference>
<dbReference type="RefSeq" id="WP_003408179.1">
    <property type="nucleotide sequence ID" value="NC_008769.1"/>
</dbReference>
<dbReference type="SMR" id="A1KJ75"/>
<dbReference type="KEGG" id="mbb:BCG_1697"/>
<dbReference type="HOGENOM" id="CLU_032784_4_2_11"/>
<dbReference type="UniPathway" id="UPA00068">
    <property type="reaction ID" value="UER00113"/>
</dbReference>
<dbReference type="Proteomes" id="UP000001472">
    <property type="component" value="Chromosome"/>
</dbReference>
<dbReference type="GO" id="GO:0005737">
    <property type="term" value="C:cytoplasm"/>
    <property type="evidence" value="ECO:0007669"/>
    <property type="project" value="UniProtKB-SubCell"/>
</dbReference>
<dbReference type="GO" id="GO:0004055">
    <property type="term" value="F:argininosuccinate synthase activity"/>
    <property type="evidence" value="ECO:0007669"/>
    <property type="project" value="UniProtKB-UniRule"/>
</dbReference>
<dbReference type="GO" id="GO:0005524">
    <property type="term" value="F:ATP binding"/>
    <property type="evidence" value="ECO:0007669"/>
    <property type="project" value="UniProtKB-UniRule"/>
</dbReference>
<dbReference type="GO" id="GO:0000053">
    <property type="term" value="P:argininosuccinate metabolic process"/>
    <property type="evidence" value="ECO:0007669"/>
    <property type="project" value="TreeGrafter"/>
</dbReference>
<dbReference type="GO" id="GO:0006526">
    <property type="term" value="P:L-arginine biosynthetic process"/>
    <property type="evidence" value="ECO:0007669"/>
    <property type="project" value="UniProtKB-UniRule"/>
</dbReference>
<dbReference type="GO" id="GO:0000050">
    <property type="term" value="P:urea cycle"/>
    <property type="evidence" value="ECO:0007669"/>
    <property type="project" value="TreeGrafter"/>
</dbReference>
<dbReference type="CDD" id="cd01999">
    <property type="entry name" value="ASS"/>
    <property type="match status" value="1"/>
</dbReference>
<dbReference type="FunFam" id="3.40.50.620:FF:000038">
    <property type="entry name" value="Argininosuccinate synthase"/>
    <property type="match status" value="1"/>
</dbReference>
<dbReference type="FunFam" id="3.90.1260.10:FF:000006">
    <property type="entry name" value="Argininosuccinate synthase"/>
    <property type="match status" value="1"/>
</dbReference>
<dbReference type="Gene3D" id="3.90.1260.10">
    <property type="entry name" value="Argininosuccinate synthetase, chain A, domain 2"/>
    <property type="match status" value="1"/>
</dbReference>
<dbReference type="Gene3D" id="3.40.50.620">
    <property type="entry name" value="HUPs"/>
    <property type="match status" value="1"/>
</dbReference>
<dbReference type="Gene3D" id="1.20.5.470">
    <property type="entry name" value="Single helix bin"/>
    <property type="match status" value="1"/>
</dbReference>
<dbReference type="HAMAP" id="MF_00005">
    <property type="entry name" value="Arg_succ_synth_type1"/>
    <property type="match status" value="1"/>
</dbReference>
<dbReference type="InterPro" id="IPR048268">
    <property type="entry name" value="Arginosuc_syn_C"/>
</dbReference>
<dbReference type="InterPro" id="IPR048267">
    <property type="entry name" value="Arginosuc_syn_N"/>
</dbReference>
<dbReference type="InterPro" id="IPR001518">
    <property type="entry name" value="Arginosuc_synth"/>
</dbReference>
<dbReference type="InterPro" id="IPR018223">
    <property type="entry name" value="Arginosuc_synth_CS"/>
</dbReference>
<dbReference type="InterPro" id="IPR023434">
    <property type="entry name" value="Arginosuc_synth_type_1_subfam"/>
</dbReference>
<dbReference type="InterPro" id="IPR024074">
    <property type="entry name" value="AS_cat/multimer_dom_body"/>
</dbReference>
<dbReference type="InterPro" id="IPR014729">
    <property type="entry name" value="Rossmann-like_a/b/a_fold"/>
</dbReference>
<dbReference type="NCBIfam" id="TIGR00032">
    <property type="entry name" value="argG"/>
    <property type="match status" value="1"/>
</dbReference>
<dbReference type="NCBIfam" id="NF001770">
    <property type="entry name" value="PRK00509.1"/>
    <property type="match status" value="1"/>
</dbReference>
<dbReference type="PANTHER" id="PTHR11587">
    <property type="entry name" value="ARGININOSUCCINATE SYNTHASE"/>
    <property type="match status" value="1"/>
</dbReference>
<dbReference type="PANTHER" id="PTHR11587:SF2">
    <property type="entry name" value="ARGININOSUCCINATE SYNTHASE"/>
    <property type="match status" value="1"/>
</dbReference>
<dbReference type="Pfam" id="PF20979">
    <property type="entry name" value="Arginosuc_syn_C"/>
    <property type="match status" value="1"/>
</dbReference>
<dbReference type="Pfam" id="PF00764">
    <property type="entry name" value="Arginosuc_synth"/>
    <property type="match status" value="1"/>
</dbReference>
<dbReference type="SUPFAM" id="SSF52402">
    <property type="entry name" value="Adenine nucleotide alpha hydrolases-like"/>
    <property type="match status" value="1"/>
</dbReference>
<dbReference type="SUPFAM" id="SSF69864">
    <property type="entry name" value="Argininosuccinate synthetase, C-terminal domain"/>
    <property type="match status" value="1"/>
</dbReference>
<dbReference type="PROSITE" id="PS00564">
    <property type="entry name" value="ARGININOSUCCIN_SYN_1"/>
    <property type="match status" value="1"/>
</dbReference>
<dbReference type="PROSITE" id="PS00565">
    <property type="entry name" value="ARGININOSUCCIN_SYN_2"/>
    <property type="match status" value="1"/>
</dbReference>
<comment type="catalytic activity">
    <reaction evidence="1">
        <text>L-citrulline + L-aspartate + ATP = 2-(N(omega)-L-arginino)succinate + AMP + diphosphate + H(+)</text>
        <dbReference type="Rhea" id="RHEA:10932"/>
        <dbReference type="ChEBI" id="CHEBI:15378"/>
        <dbReference type="ChEBI" id="CHEBI:29991"/>
        <dbReference type="ChEBI" id="CHEBI:30616"/>
        <dbReference type="ChEBI" id="CHEBI:33019"/>
        <dbReference type="ChEBI" id="CHEBI:57472"/>
        <dbReference type="ChEBI" id="CHEBI:57743"/>
        <dbReference type="ChEBI" id="CHEBI:456215"/>
        <dbReference type="EC" id="6.3.4.5"/>
    </reaction>
</comment>
<comment type="pathway">
    <text evidence="1">Amino-acid biosynthesis; L-arginine biosynthesis; L-arginine from L-ornithine and carbamoyl phosphate: step 2/3.</text>
</comment>
<comment type="subunit">
    <text evidence="1">Homotetramer.</text>
</comment>
<comment type="subcellular location">
    <subcellularLocation>
        <location evidence="1">Cytoplasm</location>
    </subcellularLocation>
</comment>
<comment type="similarity">
    <text evidence="1">Belongs to the argininosuccinate synthase family. Type 1 subfamily.</text>
</comment>
<organism>
    <name type="scientific">Mycobacterium bovis (strain BCG / Pasteur 1173P2)</name>
    <dbReference type="NCBI Taxonomy" id="410289"/>
    <lineage>
        <taxon>Bacteria</taxon>
        <taxon>Bacillati</taxon>
        <taxon>Actinomycetota</taxon>
        <taxon>Actinomycetes</taxon>
        <taxon>Mycobacteriales</taxon>
        <taxon>Mycobacteriaceae</taxon>
        <taxon>Mycobacterium</taxon>
        <taxon>Mycobacterium tuberculosis complex</taxon>
    </lineage>
</organism>
<protein>
    <recommendedName>
        <fullName evidence="1">Argininosuccinate synthase</fullName>
        <ecNumber evidence="1">6.3.4.5</ecNumber>
    </recommendedName>
    <alternativeName>
        <fullName evidence="1">Citrulline--aspartate ligase</fullName>
    </alternativeName>
</protein>
<name>ASSY_MYCBP</name>
<evidence type="ECO:0000255" key="1">
    <source>
        <dbReference type="HAMAP-Rule" id="MF_00005"/>
    </source>
</evidence>
<sequence length="398" mass="43682">MSERVILAYSGGLDTSVAISWIGKETGREVVAVAIDLGQGGEHMDVIRQRALDCGAVEAVVVDARDEFAEGYCLPTVLNNALYMDRYPLVSAISRPLIVKHLVAAAREHGGGIVAHGCTGKGNDQVRFEVGFASLAPDLEVLAPVRDYAWTREKAIAFAEENAIPINVTKRSPFSIDQNVWGRAVETGFLEHLWNAPTKDIYAYTEDPTINWGVPDEVIVGFERGVPVSVDGKPVSMLAAIEELNRRAGAQGVGRLDVVEDRLVGIKSREIYEAPGAMVLITAHTELEHVTLERELGRFKRQTDQRWAELVYDGLWYSPLKAALEAFVAKTQEHVSGEVRLVLHGGHIAVNGRRSAESLYDFNLATYDEGDSFDQSAARGFVYVHGLSSKLAARRDLR</sequence>